<sequence length="157" mass="17808">MSRRNRAPKRDILPDPKYKSQVVAKFVNHIMLSGKKSIAEKIVYGAFDKIKAKDASANEVEVFEKALESVSPMVEVKSRRVGGATYQVPVEVRPERRQTLGMRWIIDAARKRKENTMGDRVAAEILEAVEGRGAAVKKREDTHKMAEANKAFAHFRW</sequence>
<evidence type="ECO:0000255" key="1">
    <source>
        <dbReference type="HAMAP-Rule" id="MF_00480"/>
    </source>
</evidence>
<evidence type="ECO:0000305" key="2"/>
<name>RS7_FRATW</name>
<keyword id="KW-0687">Ribonucleoprotein</keyword>
<keyword id="KW-0689">Ribosomal protein</keyword>
<keyword id="KW-0694">RNA-binding</keyword>
<keyword id="KW-0699">rRNA-binding</keyword>
<keyword id="KW-0820">tRNA-binding</keyword>
<organism>
    <name type="scientific">Francisella tularensis subsp. tularensis (strain WY96-3418)</name>
    <dbReference type="NCBI Taxonomy" id="418136"/>
    <lineage>
        <taxon>Bacteria</taxon>
        <taxon>Pseudomonadati</taxon>
        <taxon>Pseudomonadota</taxon>
        <taxon>Gammaproteobacteria</taxon>
        <taxon>Thiotrichales</taxon>
        <taxon>Francisellaceae</taxon>
        <taxon>Francisella</taxon>
    </lineage>
</organism>
<feature type="chain" id="PRO_1000014197" description="Small ribosomal subunit protein uS7">
    <location>
        <begin position="1"/>
        <end position="157"/>
    </location>
</feature>
<comment type="function">
    <text evidence="1">One of the primary rRNA binding proteins, it binds directly to 16S rRNA where it nucleates assembly of the head domain of the 30S subunit. Is located at the subunit interface close to the decoding center, probably blocks exit of the E-site tRNA.</text>
</comment>
<comment type="subunit">
    <text evidence="1">Part of the 30S ribosomal subunit. Contacts proteins S9 and S11.</text>
</comment>
<comment type="similarity">
    <text evidence="1">Belongs to the universal ribosomal protein uS7 family.</text>
</comment>
<reference key="1">
    <citation type="journal article" date="2007" name="PLoS ONE">
        <title>Complete genomic characterization of a pathogenic A.II strain of Francisella tularensis subspecies tularensis.</title>
        <authorList>
            <person name="Beckstrom-Sternberg S.M."/>
            <person name="Auerbach R.K."/>
            <person name="Godbole S."/>
            <person name="Pearson J.V."/>
            <person name="Beckstrom-Sternberg J.S."/>
            <person name="Deng Z."/>
            <person name="Munk C."/>
            <person name="Kubota K."/>
            <person name="Zhou Y."/>
            <person name="Bruce D."/>
            <person name="Noronha J."/>
            <person name="Scheuermann R.H."/>
            <person name="Wang A."/>
            <person name="Wei X."/>
            <person name="Wang J."/>
            <person name="Hao J."/>
            <person name="Wagner D.M."/>
            <person name="Brettin T.S."/>
            <person name="Brown N."/>
            <person name="Gilna P."/>
            <person name="Keim P.S."/>
        </authorList>
    </citation>
    <scope>NUCLEOTIDE SEQUENCE [LARGE SCALE GENOMIC DNA]</scope>
    <source>
        <strain>WY96-3418</strain>
    </source>
</reference>
<dbReference type="EMBL" id="CP000608">
    <property type="protein sequence ID" value="ABO47436.1"/>
    <property type="molecule type" value="Genomic_DNA"/>
</dbReference>
<dbReference type="RefSeq" id="WP_003021606.1">
    <property type="nucleotide sequence ID" value="NC_009257.1"/>
</dbReference>
<dbReference type="SMR" id="A4IZT7"/>
<dbReference type="GeneID" id="75264264"/>
<dbReference type="KEGG" id="ftw:FTW_1760"/>
<dbReference type="HOGENOM" id="CLU_072226_1_1_6"/>
<dbReference type="GO" id="GO:0015935">
    <property type="term" value="C:small ribosomal subunit"/>
    <property type="evidence" value="ECO:0007669"/>
    <property type="project" value="InterPro"/>
</dbReference>
<dbReference type="GO" id="GO:0019843">
    <property type="term" value="F:rRNA binding"/>
    <property type="evidence" value="ECO:0007669"/>
    <property type="project" value="UniProtKB-UniRule"/>
</dbReference>
<dbReference type="GO" id="GO:0003735">
    <property type="term" value="F:structural constituent of ribosome"/>
    <property type="evidence" value="ECO:0007669"/>
    <property type="project" value="InterPro"/>
</dbReference>
<dbReference type="GO" id="GO:0000049">
    <property type="term" value="F:tRNA binding"/>
    <property type="evidence" value="ECO:0007669"/>
    <property type="project" value="UniProtKB-UniRule"/>
</dbReference>
<dbReference type="GO" id="GO:0006412">
    <property type="term" value="P:translation"/>
    <property type="evidence" value="ECO:0007669"/>
    <property type="project" value="UniProtKB-UniRule"/>
</dbReference>
<dbReference type="CDD" id="cd14869">
    <property type="entry name" value="uS7_Bacteria"/>
    <property type="match status" value="1"/>
</dbReference>
<dbReference type="FunFam" id="1.10.455.10:FF:000001">
    <property type="entry name" value="30S ribosomal protein S7"/>
    <property type="match status" value="1"/>
</dbReference>
<dbReference type="Gene3D" id="1.10.455.10">
    <property type="entry name" value="Ribosomal protein S7 domain"/>
    <property type="match status" value="1"/>
</dbReference>
<dbReference type="HAMAP" id="MF_00480_B">
    <property type="entry name" value="Ribosomal_uS7_B"/>
    <property type="match status" value="1"/>
</dbReference>
<dbReference type="InterPro" id="IPR000235">
    <property type="entry name" value="Ribosomal_uS7"/>
</dbReference>
<dbReference type="InterPro" id="IPR005717">
    <property type="entry name" value="Ribosomal_uS7_bac/org-type"/>
</dbReference>
<dbReference type="InterPro" id="IPR020606">
    <property type="entry name" value="Ribosomal_uS7_CS"/>
</dbReference>
<dbReference type="InterPro" id="IPR023798">
    <property type="entry name" value="Ribosomal_uS7_dom"/>
</dbReference>
<dbReference type="InterPro" id="IPR036823">
    <property type="entry name" value="Ribosomal_uS7_dom_sf"/>
</dbReference>
<dbReference type="NCBIfam" id="TIGR01029">
    <property type="entry name" value="rpsG_bact"/>
    <property type="match status" value="1"/>
</dbReference>
<dbReference type="PANTHER" id="PTHR11205">
    <property type="entry name" value="RIBOSOMAL PROTEIN S7"/>
    <property type="match status" value="1"/>
</dbReference>
<dbReference type="Pfam" id="PF00177">
    <property type="entry name" value="Ribosomal_S7"/>
    <property type="match status" value="1"/>
</dbReference>
<dbReference type="PIRSF" id="PIRSF002122">
    <property type="entry name" value="RPS7p_RPS7a_RPS5e_RPS7o"/>
    <property type="match status" value="1"/>
</dbReference>
<dbReference type="SUPFAM" id="SSF47973">
    <property type="entry name" value="Ribosomal protein S7"/>
    <property type="match status" value="1"/>
</dbReference>
<dbReference type="PROSITE" id="PS00052">
    <property type="entry name" value="RIBOSOMAL_S7"/>
    <property type="match status" value="1"/>
</dbReference>
<gene>
    <name evidence="1" type="primary">rpsG</name>
    <name type="ordered locus">FTW_1760</name>
</gene>
<accession>A4IZT7</accession>
<protein>
    <recommendedName>
        <fullName evidence="1">Small ribosomal subunit protein uS7</fullName>
    </recommendedName>
    <alternativeName>
        <fullName evidence="2">30S ribosomal protein S7</fullName>
    </alternativeName>
</protein>
<proteinExistence type="inferred from homology"/>